<organism>
    <name type="scientific">Neurospora crassa (strain ATCC 24698 / 74-OR23-1A / CBS 708.71 / DSM 1257 / FGSC 987)</name>
    <dbReference type="NCBI Taxonomy" id="367110"/>
    <lineage>
        <taxon>Eukaryota</taxon>
        <taxon>Fungi</taxon>
        <taxon>Dikarya</taxon>
        <taxon>Ascomycota</taxon>
        <taxon>Pezizomycotina</taxon>
        <taxon>Sordariomycetes</taxon>
        <taxon>Sordariomycetidae</taxon>
        <taxon>Sordariales</taxon>
        <taxon>Sordariaceae</taxon>
        <taxon>Neurospora</taxon>
    </lineage>
</organism>
<evidence type="ECO:0000269" key="1">
    <source>
    </source>
</evidence>
<evidence type="ECO:0000269" key="2">
    <source>
    </source>
</evidence>
<evidence type="ECO:0000269" key="3">
    <source>
    </source>
</evidence>
<evidence type="ECO:0000269" key="4">
    <source>
    </source>
</evidence>
<evidence type="ECO:0000269" key="5">
    <source>
    </source>
</evidence>
<evidence type="ECO:0000305" key="6"/>
<evidence type="ECO:0007829" key="7">
    <source>
        <dbReference type="PDB" id="2XL1"/>
    </source>
</evidence>
<name>AAP_NEUCR</name>
<feature type="peptide" id="PRO_0000043975" description="Arginine attenuator peptide">
    <location>
        <begin position="1"/>
        <end position="24"/>
    </location>
</feature>
<feature type="mutagenesis site" description="Eliminates arginine-specific stalling of ribosomes at the termination codon." evidence="3">
    <original>D</original>
    <variation>N</variation>
    <location>
        <position position="12"/>
    </location>
</feature>
<feature type="helix" evidence="7">
    <location>
        <begin position="11"/>
        <end position="23"/>
    </location>
</feature>
<reference key="1">
    <citation type="journal article" date="1990" name="J. Biol. Chem.">
        <title>The Neurospora crassa arg-2 locus. Structure and expression of the gene encoding the small subunit of arginine-specific carbamoyl phosphate synthetase.</title>
        <authorList>
            <person name="Orbach M.J."/>
            <person name="Sachs M.S."/>
            <person name="Yanofsky C."/>
        </authorList>
    </citation>
    <scope>NUCLEOTIDE SEQUENCE [GENOMIC DNA]</scope>
</reference>
<reference key="2">
    <citation type="journal article" date="2003" name="Nature">
        <title>The genome sequence of the filamentous fungus Neurospora crassa.</title>
        <authorList>
            <person name="Galagan J.E."/>
            <person name="Calvo S.E."/>
            <person name="Borkovich K.A."/>
            <person name="Selker E.U."/>
            <person name="Read N.D."/>
            <person name="Jaffe D.B."/>
            <person name="FitzHugh W."/>
            <person name="Ma L.-J."/>
            <person name="Smirnov S."/>
            <person name="Purcell S."/>
            <person name="Rehman B."/>
            <person name="Elkins T."/>
            <person name="Engels R."/>
            <person name="Wang S."/>
            <person name="Nielsen C.B."/>
            <person name="Butler J."/>
            <person name="Endrizzi M."/>
            <person name="Qui D."/>
            <person name="Ianakiev P."/>
            <person name="Bell-Pedersen D."/>
            <person name="Nelson M.A."/>
            <person name="Werner-Washburne M."/>
            <person name="Selitrennikoff C.P."/>
            <person name="Kinsey J.A."/>
            <person name="Braun E.L."/>
            <person name="Zelter A."/>
            <person name="Schulte U."/>
            <person name="Kothe G.O."/>
            <person name="Jedd G."/>
            <person name="Mewes H.-W."/>
            <person name="Staben C."/>
            <person name="Marcotte E."/>
            <person name="Greenberg D."/>
            <person name="Roy A."/>
            <person name="Foley K."/>
            <person name="Naylor J."/>
            <person name="Stange-Thomann N."/>
            <person name="Barrett R."/>
            <person name="Gnerre S."/>
            <person name="Kamal M."/>
            <person name="Kamvysselis M."/>
            <person name="Mauceli E.W."/>
            <person name="Bielke C."/>
            <person name="Rudd S."/>
            <person name="Frishman D."/>
            <person name="Krystofova S."/>
            <person name="Rasmussen C."/>
            <person name="Metzenberg R.L."/>
            <person name="Perkins D.D."/>
            <person name="Kroken S."/>
            <person name="Cogoni C."/>
            <person name="Macino G."/>
            <person name="Catcheside D.E.A."/>
            <person name="Li W."/>
            <person name="Pratt R.J."/>
            <person name="Osmani S.A."/>
            <person name="DeSouza C.P.C."/>
            <person name="Glass N.L."/>
            <person name="Orbach M.J."/>
            <person name="Berglund J.A."/>
            <person name="Voelker R."/>
            <person name="Yarden O."/>
            <person name="Plamann M."/>
            <person name="Seiler S."/>
            <person name="Dunlap J.C."/>
            <person name="Radford A."/>
            <person name="Aramayo R."/>
            <person name="Natvig D.O."/>
            <person name="Alex L.A."/>
            <person name="Mannhaupt G."/>
            <person name="Ebbole D.J."/>
            <person name="Freitag M."/>
            <person name="Paulsen I."/>
            <person name="Sachs M.S."/>
            <person name="Lander E.S."/>
            <person name="Nusbaum C."/>
            <person name="Birren B.W."/>
        </authorList>
    </citation>
    <scope>NUCLEOTIDE SEQUENCE [LARGE SCALE GENOMIC DNA]</scope>
    <source>
        <strain>ATCC 24698 / 74-OR23-1A / CBS 708.71 / DSM 1257 / FGSC 987</strain>
    </source>
</reference>
<reference key="3">
    <citation type="journal article" date="1996" name="Genetics">
        <title>A UV-induced mutation in Neurospora that affects translational regulation in response to arginine.</title>
        <authorList>
            <person name="Freitag M."/>
            <person name="Dighde N."/>
            <person name="Sachs M.S."/>
        </authorList>
    </citation>
    <scope>MUTAGENESIS OF ASP-12</scope>
</reference>
<reference key="4">
    <citation type="journal article" date="1996" name="J. Bacteriol.">
        <title>Role of an upstream open reading frame in mediating arginine-specific translational control in Neurospora crassa.</title>
        <authorList>
            <person name="Luo Z."/>
            <person name="Sachs M.S."/>
        </authorList>
    </citation>
    <scope>FUNCTION</scope>
</reference>
<reference key="5">
    <citation type="journal article" date="1997" name="Mol. Cell. Biol.">
        <title>Ribosome stalling is responsible for arginine-specific translational attenuation in Neurospora crassa.</title>
        <authorList>
            <person name="Wang Z."/>
            <person name="Sachs M.S."/>
        </authorList>
    </citation>
    <scope>FUNCTION</scope>
</reference>
<reference key="6">
    <citation type="journal article" date="1998" name="Mol. Cell. Biol.">
        <title>The evolutionarily conserved eukaryotic arginine attenuator peptide regulates the movement of ribosomes that have translated it.</title>
        <authorList>
            <person name="Wang Z."/>
            <person name="Fang P."/>
            <person name="Sachs M.S."/>
        </authorList>
    </citation>
    <scope>FUNCTION</scope>
</reference>
<reference key="7">
    <citation type="journal article" date="1999" name="J. Biol. Chem.">
        <title>A highly conserved mechanism of regulated ribosome stalling mediated by fungal arginine attenuator peptides that appears independent of the charging status of arginyl-tRNAs.</title>
        <authorList>
            <person name="Wang Z."/>
            <person name="Gaba A."/>
            <person name="Sachs M.S."/>
        </authorList>
    </citation>
    <scope>FUNCTION</scope>
</reference>
<comment type="function">
    <text evidence="1 2 4 5">Arginine attenuator peptide (AAP) that has a regulatory role in the production of arginine-specific carbamoyl phosphate synthetase. Encoded by an upstream open reading frame (uORF) within the 5'-leader region of arginine-specific carbamoyl phosphate synthetase small chain (arg-2) mRNA, it attenuates the translation of the downstream arg-2 ORF. In the presence of high concentrations of arginine, ribosomes translating the uORF encoding AAP stall at the termination codon, resulting in reduced translation from the downstream arg-2 initiation codon.</text>
</comment>
<comment type="similarity">
    <text evidence="6">Belongs to the arginine attenuator peptide family.</text>
</comment>
<keyword id="KW-0002">3D-structure</keyword>
<keyword id="KW-0428">Leader peptide</keyword>
<keyword id="KW-1185">Reference proteome</keyword>
<protein>
    <recommendedName>
        <fullName>Arginine attenuator peptide</fullName>
        <shortName>AAP</shortName>
    </recommendedName>
    <alternativeName>
        <fullName>Arg-2 leader peptide</fullName>
    </alternativeName>
</protein>
<dbReference type="EMBL" id="J05512">
    <property type="protein sequence ID" value="AAA33610.1"/>
    <property type="molecule type" value="Genomic_DNA"/>
</dbReference>
<dbReference type="EMBL" id="CM002239">
    <property type="status" value="NOT_ANNOTATED_CDS"/>
    <property type="molecule type" value="Genomic_DNA"/>
</dbReference>
<dbReference type="PIR" id="B42224">
    <property type="entry name" value="B42224"/>
</dbReference>
<dbReference type="PDB" id="2XL1">
    <property type="method" value="NMR"/>
    <property type="chains" value="A=1-24"/>
</dbReference>
<dbReference type="PDBsum" id="2XL1"/>
<dbReference type="SMR" id="P22702"/>
<dbReference type="STRING" id="367110.P22702"/>
<dbReference type="InParanoid" id="P22702"/>
<dbReference type="EvolutionaryTrace" id="P22702"/>
<dbReference type="Proteomes" id="UP000001805">
    <property type="component" value="Chromosome 4, Linkage Group IV"/>
</dbReference>
<dbReference type="GO" id="GO:0009386">
    <property type="term" value="P:translational attenuation"/>
    <property type="evidence" value="ECO:0000314"/>
    <property type="project" value="CACAO"/>
</dbReference>
<dbReference type="InterPro" id="IPR013203">
    <property type="entry name" value="Leader_Arg2_CPA1"/>
</dbReference>
<dbReference type="Pfam" id="PF08252">
    <property type="entry name" value="Leader_CPA1"/>
    <property type="match status" value="1"/>
</dbReference>
<proteinExistence type="evidence at protein level"/>
<accession>P22702</accession>
<sequence length="24" mass="2779">MNGRPSVFTSQDYLSDHLWRALNA</sequence>